<protein>
    <recommendedName>
        <fullName evidence="1">Protein GrpE</fullName>
    </recommendedName>
    <alternativeName>
        <fullName evidence="1">HSP-70 cofactor</fullName>
    </alternativeName>
</protein>
<feature type="chain" id="PRO_1000053626" description="Protein GrpE">
    <location>
        <begin position="1"/>
        <end position="189"/>
    </location>
</feature>
<feature type="region of interest" description="Disordered" evidence="2">
    <location>
        <begin position="1"/>
        <end position="24"/>
    </location>
</feature>
<dbReference type="EMBL" id="CP000094">
    <property type="protein sequence ID" value="ABA72505.1"/>
    <property type="molecule type" value="Genomic_DNA"/>
</dbReference>
<dbReference type="RefSeq" id="WP_011332394.1">
    <property type="nucleotide sequence ID" value="NC_007492.2"/>
</dbReference>
<dbReference type="SMR" id="Q3KIA1"/>
<dbReference type="KEGG" id="pfo:Pfl01_0762"/>
<dbReference type="eggNOG" id="COG0576">
    <property type="taxonomic scope" value="Bacteria"/>
</dbReference>
<dbReference type="HOGENOM" id="CLU_057217_6_0_6"/>
<dbReference type="Proteomes" id="UP000002704">
    <property type="component" value="Chromosome"/>
</dbReference>
<dbReference type="GO" id="GO:0005829">
    <property type="term" value="C:cytosol"/>
    <property type="evidence" value="ECO:0007669"/>
    <property type="project" value="TreeGrafter"/>
</dbReference>
<dbReference type="GO" id="GO:0000774">
    <property type="term" value="F:adenyl-nucleotide exchange factor activity"/>
    <property type="evidence" value="ECO:0007669"/>
    <property type="project" value="InterPro"/>
</dbReference>
<dbReference type="GO" id="GO:0042803">
    <property type="term" value="F:protein homodimerization activity"/>
    <property type="evidence" value="ECO:0007669"/>
    <property type="project" value="InterPro"/>
</dbReference>
<dbReference type="GO" id="GO:0051087">
    <property type="term" value="F:protein-folding chaperone binding"/>
    <property type="evidence" value="ECO:0007669"/>
    <property type="project" value="InterPro"/>
</dbReference>
<dbReference type="GO" id="GO:0051082">
    <property type="term" value="F:unfolded protein binding"/>
    <property type="evidence" value="ECO:0007669"/>
    <property type="project" value="TreeGrafter"/>
</dbReference>
<dbReference type="GO" id="GO:0006457">
    <property type="term" value="P:protein folding"/>
    <property type="evidence" value="ECO:0007669"/>
    <property type="project" value="InterPro"/>
</dbReference>
<dbReference type="CDD" id="cd00446">
    <property type="entry name" value="GrpE"/>
    <property type="match status" value="1"/>
</dbReference>
<dbReference type="FunFam" id="2.30.22.10:FF:000001">
    <property type="entry name" value="Protein GrpE"/>
    <property type="match status" value="1"/>
</dbReference>
<dbReference type="Gene3D" id="3.90.20.20">
    <property type="match status" value="1"/>
</dbReference>
<dbReference type="Gene3D" id="2.30.22.10">
    <property type="entry name" value="Head domain of nucleotide exchange factor GrpE"/>
    <property type="match status" value="1"/>
</dbReference>
<dbReference type="HAMAP" id="MF_01151">
    <property type="entry name" value="GrpE"/>
    <property type="match status" value="1"/>
</dbReference>
<dbReference type="InterPro" id="IPR000740">
    <property type="entry name" value="GrpE"/>
</dbReference>
<dbReference type="InterPro" id="IPR013805">
    <property type="entry name" value="GrpE_coiled_coil"/>
</dbReference>
<dbReference type="InterPro" id="IPR009012">
    <property type="entry name" value="GrpE_head"/>
</dbReference>
<dbReference type="NCBIfam" id="NF010738">
    <property type="entry name" value="PRK14140.1"/>
    <property type="match status" value="1"/>
</dbReference>
<dbReference type="NCBIfam" id="NF010748">
    <property type="entry name" value="PRK14150.1"/>
    <property type="match status" value="1"/>
</dbReference>
<dbReference type="NCBIfam" id="NF010749">
    <property type="entry name" value="PRK14151.1"/>
    <property type="match status" value="1"/>
</dbReference>
<dbReference type="PANTHER" id="PTHR21237">
    <property type="entry name" value="GRPE PROTEIN"/>
    <property type="match status" value="1"/>
</dbReference>
<dbReference type="PANTHER" id="PTHR21237:SF23">
    <property type="entry name" value="GRPE PROTEIN HOMOLOG, MITOCHONDRIAL"/>
    <property type="match status" value="1"/>
</dbReference>
<dbReference type="Pfam" id="PF01025">
    <property type="entry name" value="GrpE"/>
    <property type="match status" value="1"/>
</dbReference>
<dbReference type="PRINTS" id="PR00773">
    <property type="entry name" value="GRPEPROTEIN"/>
</dbReference>
<dbReference type="SUPFAM" id="SSF58014">
    <property type="entry name" value="Coiled-coil domain of nucleotide exchange factor GrpE"/>
    <property type="match status" value="1"/>
</dbReference>
<dbReference type="SUPFAM" id="SSF51064">
    <property type="entry name" value="Head domain of nucleotide exchange factor GrpE"/>
    <property type="match status" value="1"/>
</dbReference>
<dbReference type="PROSITE" id="PS01071">
    <property type="entry name" value="GRPE"/>
    <property type="match status" value="1"/>
</dbReference>
<accession>Q3KIA1</accession>
<evidence type="ECO:0000255" key="1">
    <source>
        <dbReference type="HAMAP-Rule" id="MF_01151"/>
    </source>
</evidence>
<evidence type="ECO:0000256" key="2">
    <source>
        <dbReference type="SAM" id="MobiDB-lite"/>
    </source>
</evidence>
<comment type="function">
    <text evidence="1">Participates actively in the response to hyperosmotic and heat shock by preventing the aggregation of stress-denatured proteins, in association with DnaK and GrpE. It is the nucleotide exchange factor for DnaK and may function as a thermosensor. Unfolded proteins bind initially to DnaJ; upon interaction with the DnaJ-bound protein, DnaK hydrolyzes its bound ATP, resulting in the formation of a stable complex. GrpE releases ADP from DnaK; ATP binding to DnaK triggers the release of the substrate protein, thus completing the reaction cycle. Several rounds of ATP-dependent interactions between DnaJ, DnaK and GrpE are required for fully efficient folding.</text>
</comment>
<comment type="subunit">
    <text evidence="1">Homodimer.</text>
</comment>
<comment type="subcellular location">
    <subcellularLocation>
        <location evidence="1">Cytoplasm</location>
    </subcellularLocation>
</comment>
<comment type="similarity">
    <text evidence="1">Belongs to the GrpE family.</text>
</comment>
<sequence length="189" mass="20860">MADEQTVDTQNPEANQAPEASGDDLATRVQVLEEQLAAAQDQSLRVAADLQNVRRRAEQDVEKAHKFALEKFAGDLLPIVDSLERGLELSSPDDESIRPMREGIELTLKMFHDTLTRYQLVAVSPQEGEPFNAVEHQAMAMQESADLEPNSILKVFQKGYQLNGRLLRPAMVVVSKAPAPVSPSIDEKA</sequence>
<gene>
    <name evidence="1" type="primary">grpE</name>
    <name type="ordered locus">Pfl01_0762</name>
</gene>
<organism>
    <name type="scientific">Pseudomonas fluorescens (strain Pf0-1)</name>
    <dbReference type="NCBI Taxonomy" id="205922"/>
    <lineage>
        <taxon>Bacteria</taxon>
        <taxon>Pseudomonadati</taxon>
        <taxon>Pseudomonadota</taxon>
        <taxon>Gammaproteobacteria</taxon>
        <taxon>Pseudomonadales</taxon>
        <taxon>Pseudomonadaceae</taxon>
        <taxon>Pseudomonas</taxon>
    </lineage>
</organism>
<name>GRPE_PSEPF</name>
<keyword id="KW-0143">Chaperone</keyword>
<keyword id="KW-0963">Cytoplasm</keyword>
<keyword id="KW-0346">Stress response</keyword>
<reference key="1">
    <citation type="journal article" date="2009" name="Genome Biol.">
        <title>Genomic and genetic analyses of diversity and plant interactions of Pseudomonas fluorescens.</title>
        <authorList>
            <person name="Silby M.W."/>
            <person name="Cerdeno-Tarraga A.M."/>
            <person name="Vernikos G.S."/>
            <person name="Giddens S.R."/>
            <person name="Jackson R.W."/>
            <person name="Preston G.M."/>
            <person name="Zhang X.-X."/>
            <person name="Moon C.D."/>
            <person name="Gehrig S.M."/>
            <person name="Godfrey S.A.C."/>
            <person name="Knight C.G."/>
            <person name="Malone J.G."/>
            <person name="Robinson Z."/>
            <person name="Spiers A.J."/>
            <person name="Harris S."/>
            <person name="Challis G.L."/>
            <person name="Yaxley A.M."/>
            <person name="Harris D."/>
            <person name="Seeger K."/>
            <person name="Murphy L."/>
            <person name="Rutter S."/>
            <person name="Squares R."/>
            <person name="Quail M.A."/>
            <person name="Saunders E."/>
            <person name="Mavromatis K."/>
            <person name="Brettin T.S."/>
            <person name="Bentley S.D."/>
            <person name="Hothersall J."/>
            <person name="Stephens E."/>
            <person name="Thomas C.M."/>
            <person name="Parkhill J."/>
            <person name="Levy S.B."/>
            <person name="Rainey P.B."/>
            <person name="Thomson N.R."/>
        </authorList>
    </citation>
    <scope>NUCLEOTIDE SEQUENCE [LARGE SCALE GENOMIC DNA]</scope>
    <source>
        <strain>Pf0-1</strain>
    </source>
</reference>
<proteinExistence type="inferred from homology"/>